<name>RL24_ARCFU</name>
<comment type="function">
    <text evidence="1">One of two assembly initiator proteins, it binds directly to the 5'-end of the 23S rRNA, where it nucleates assembly of the 50S subunit.</text>
</comment>
<comment type="function">
    <text evidence="1">Located at the polypeptide exit tunnel on the outside of the subunit.</text>
</comment>
<comment type="subunit">
    <text evidence="1">Part of the 50S ribosomal subunit.</text>
</comment>
<comment type="similarity">
    <text evidence="1">Belongs to the universal ribosomal protein uL24 family.</text>
</comment>
<proteinExistence type="inferred from homology"/>
<reference key="1">
    <citation type="journal article" date="1997" name="Nature">
        <title>The complete genome sequence of the hyperthermophilic, sulphate-reducing archaeon Archaeoglobus fulgidus.</title>
        <authorList>
            <person name="Klenk H.-P."/>
            <person name="Clayton R.A."/>
            <person name="Tomb J.-F."/>
            <person name="White O."/>
            <person name="Nelson K.E."/>
            <person name="Ketchum K.A."/>
            <person name="Dodson R.J."/>
            <person name="Gwinn M.L."/>
            <person name="Hickey E.K."/>
            <person name="Peterson J.D."/>
            <person name="Richardson D.L."/>
            <person name="Kerlavage A.R."/>
            <person name="Graham D.E."/>
            <person name="Kyrpides N.C."/>
            <person name="Fleischmann R.D."/>
            <person name="Quackenbush J."/>
            <person name="Lee N.H."/>
            <person name="Sutton G.G."/>
            <person name="Gill S.R."/>
            <person name="Kirkness E.F."/>
            <person name="Dougherty B.A."/>
            <person name="McKenney K."/>
            <person name="Adams M.D."/>
            <person name="Loftus B.J."/>
            <person name="Peterson S.N."/>
            <person name="Reich C.I."/>
            <person name="McNeil L.K."/>
            <person name="Badger J.H."/>
            <person name="Glodek A."/>
            <person name="Zhou L."/>
            <person name="Overbeek R."/>
            <person name="Gocayne J.D."/>
            <person name="Weidman J.F."/>
            <person name="McDonald L.A."/>
            <person name="Utterback T.R."/>
            <person name="Cotton M.D."/>
            <person name="Spriggs T."/>
            <person name="Artiach P."/>
            <person name="Kaine B.P."/>
            <person name="Sykes S.M."/>
            <person name="Sadow P.W."/>
            <person name="D'Andrea K.P."/>
            <person name="Bowman C."/>
            <person name="Fujii C."/>
            <person name="Garland S.A."/>
            <person name="Mason T.M."/>
            <person name="Olsen G.J."/>
            <person name="Fraser C.M."/>
            <person name="Smith H.O."/>
            <person name="Woese C.R."/>
            <person name="Venter J.C."/>
        </authorList>
    </citation>
    <scope>NUCLEOTIDE SEQUENCE [LARGE SCALE GENOMIC DNA]</scope>
    <source>
        <strain>ATCC 49558 / DSM 4304 / JCM 9628 / NBRC 100126 / VC-16</strain>
    </source>
</reference>
<feature type="chain" id="PRO_0000130766" description="Large ribosomal subunit protein uL24">
    <location>
        <begin position="1"/>
        <end position="120"/>
    </location>
</feature>
<protein>
    <recommendedName>
        <fullName evidence="1">Large ribosomal subunit protein uL24</fullName>
    </recommendedName>
    <alternativeName>
        <fullName evidence="2">50S ribosomal protein L24</fullName>
    </alternativeName>
</protein>
<accession>O28365</accession>
<sequence length="120" mass="13924">MAVPKSKQPRKQRRWLYKTAKLHERHKLLHATLSKDLRKKYGKRAIRVRKGDKVRIMRGQFAGHEGRVLEVDMKRCRITVDGVTVTKADGTEVAVPIHPSNVMITDFGEVDEVRKKILER</sequence>
<keyword id="KW-1185">Reference proteome</keyword>
<keyword id="KW-0687">Ribonucleoprotein</keyword>
<keyword id="KW-0689">Ribosomal protein</keyword>
<keyword id="KW-0694">RNA-binding</keyword>
<keyword id="KW-0699">rRNA-binding</keyword>
<evidence type="ECO:0000255" key="1">
    <source>
        <dbReference type="HAMAP-Rule" id="MF_01326"/>
    </source>
</evidence>
<evidence type="ECO:0000305" key="2"/>
<gene>
    <name evidence="1" type="primary">rpl24</name>
    <name type="ordered locus">AF_1914</name>
</gene>
<dbReference type="EMBL" id="AE000782">
    <property type="protein sequence ID" value="AAB89339.1"/>
    <property type="molecule type" value="Genomic_DNA"/>
</dbReference>
<dbReference type="PIR" id="A69489">
    <property type="entry name" value="A69489"/>
</dbReference>
<dbReference type="RefSeq" id="WP_010879407.1">
    <property type="nucleotide sequence ID" value="NC_000917.1"/>
</dbReference>
<dbReference type="SMR" id="O28365"/>
<dbReference type="STRING" id="224325.AF_1914"/>
<dbReference type="PaxDb" id="224325-AF_1914"/>
<dbReference type="EnsemblBacteria" id="AAB89339">
    <property type="protein sequence ID" value="AAB89339"/>
    <property type="gene ID" value="AF_1914"/>
</dbReference>
<dbReference type="GeneID" id="1485137"/>
<dbReference type="KEGG" id="afu:AF_1914"/>
<dbReference type="eggNOG" id="arCOG04094">
    <property type="taxonomic scope" value="Archaea"/>
</dbReference>
<dbReference type="HOGENOM" id="CLU_093240_2_1_2"/>
<dbReference type="OrthoDB" id="10899at2157"/>
<dbReference type="PhylomeDB" id="O28365"/>
<dbReference type="Proteomes" id="UP000002199">
    <property type="component" value="Chromosome"/>
</dbReference>
<dbReference type="GO" id="GO:0015934">
    <property type="term" value="C:large ribosomal subunit"/>
    <property type="evidence" value="ECO:0007669"/>
    <property type="project" value="InterPro"/>
</dbReference>
<dbReference type="GO" id="GO:0019843">
    <property type="term" value="F:rRNA binding"/>
    <property type="evidence" value="ECO:0007669"/>
    <property type="project" value="UniProtKB-UniRule"/>
</dbReference>
<dbReference type="GO" id="GO:0003735">
    <property type="term" value="F:structural constituent of ribosome"/>
    <property type="evidence" value="ECO:0007669"/>
    <property type="project" value="InterPro"/>
</dbReference>
<dbReference type="GO" id="GO:0006412">
    <property type="term" value="P:translation"/>
    <property type="evidence" value="ECO:0007669"/>
    <property type="project" value="UniProtKB-UniRule"/>
</dbReference>
<dbReference type="CDD" id="cd06089">
    <property type="entry name" value="KOW_RPL26"/>
    <property type="match status" value="1"/>
</dbReference>
<dbReference type="Gene3D" id="2.30.30.30">
    <property type="match status" value="1"/>
</dbReference>
<dbReference type="HAMAP" id="MF_01326_A">
    <property type="entry name" value="Ribosomal_uL24_A"/>
    <property type="match status" value="1"/>
</dbReference>
<dbReference type="InterPro" id="IPR005824">
    <property type="entry name" value="KOW"/>
</dbReference>
<dbReference type="InterPro" id="IPR014722">
    <property type="entry name" value="Rib_uL2_dom2"/>
</dbReference>
<dbReference type="InterPro" id="IPR005825">
    <property type="entry name" value="Ribosomal_uL24_CS"/>
</dbReference>
<dbReference type="InterPro" id="IPR005756">
    <property type="entry name" value="Ribosomal_uL24_euk/arc"/>
</dbReference>
<dbReference type="InterPro" id="IPR041988">
    <property type="entry name" value="Ribosomal_uL24_KOW"/>
</dbReference>
<dbReference type="InterPro" id="IPR008991">
    <property type="entry name" value="Translation_prot_SH3-like_sf"/>
</dbReference>
<dbReference type="NCBIfam" id="TIGR01080">
    <property type="entry name" value="rplX_A_E"/>
    <property type="match status" value="1"/>
</dbReference>
<dbReference type="PANTHER" id="PTHR11143">
    <property type="entry name" value="60S RIBOSOMAL PROTEIN L26 FAMILY MEMBER"/>
    <property type="match status" value="1"/>
</dbReference>
<dbReference type="Pfam" id="PF00467">
    <property type="entry name" value="KOW"/>
    <property type="match status" value="1"/>
</dbReference>
<dbReference type="Pfam" id="PF16906">
    <property type="entry name" value="Ribosomal_L26"/>
    <property type="match status" value="1"/>
</dbReference>
<dbReference type="SMART" id="SM00739">
    <property type="entry name" value="KOW"/>
    <property type="match status" value="1"/>
</dbReference>
<dbReference type="SUPFAM" id="SSF50104">
    <property type="entry name" value="Translation proteins SH3-like domain"/>
    <property type="match status" value="1"/>
</dbReference>
<dbReference type="PROSITE" id="PS01108">
    <property type="entry name" value="RIBOSOMAL_L24"/>
    <property type="match status" value="1"/>
</dbReference>
<organism>
    <name type="scientific">Archaeoglobus fulgidus (strain ATCC 49558 / DSM 4304 / JCM 9628 / NBRC 100126 / VC-16)</name>
    <dbReference type="NCBI Taxonomy" id="224325"/>
    <lineage>
        <taxon>Archaea</taxon>
        <taxon>Methanobacteriati</taxon>
        <taxon>Methanobacteriota</taxon>
        <taxon>Archaeoglobi</taxon>
        <taxon>Archaeoglobales</taxon>
        <taxon>Archaeoglobaceae</taxon>
        <taxon>Archaeoglobus</taxon>
    </lineage>
</organism>